<protein>
    <recommendedName>
        <fullName>Cathelin-related peptide SC5</fullName>
    </recommendedName>
    <alternativeName>
        <fullName>Antibacterial peptide SMAP-29</fullName>
    </alternativeName>
    <alternativeName>
        <fullName>Myeloid antibacterial peptide MAP-29</fullName>
    </alternativeName>
</protein>
<comment type="function">
    <text>Broad spectrum bactericidal agent.</text>
</comment>
<comment type="biophysicochemical properties">
    <temperatureDependence>
        <text>Thermostable.</text>
    </temperatureDependence>
</comment>
<comment type="subcellular location">
    <subcellularLocation>
        <location>Secreted</location>
    </subcellularLocation>
</comment>
<comment type="similarity">
    <text evidence="3">Belongs to the cathelicidin family.</text>
</comment>
<organism>
    <name type="scientific">Ovis aries</name>
    <name type="common">Sheep</name>
    <dbReference type="NCBI Taxonomy" id="9940"/>
    <lineage>
        <taxon>Eukaryota</taxon>
        <taxon>Metazoa</taxon>
        <taxon>Chordata</taxon>
        <taxon>Craniata</taxon>
        <taxon>Vertebrata</taxon>
        <taxon>Euteleostomi</taxon>
        <taxon>Mammalia</taxon>
        <taxon>Eutheria</taxon>
        <taxon>Laurasiatheria</taxon>
        <taxon>Artiodactyla</taxon>
        <taxon>Ruminantia</taxon>
        <taxon>Pecora</taxon>
        <taxon>Bovidae</taxon>
        <taxon>Caprinae</taxon>
        <taxon>Ovis</taxon>
    </lineage>
</organism>
<accession>P49928</accession>
<sequence>METQRASLSLGRCSLWLLLLGLALPSASAQVLSYREAVLRAADQLNEKSSEANLYRLLELDPPPKQDDENSNIPKPVSFRVKETVCPRTSQQPAEQCDFKENGLLKECVGTVTLDQVRNNFDITCAEPQSVRGLRRLGRKIAHGVKKYGPTVLRIIRIAG</sequence>
<evidence type="ECO:0000250" key="1"/>
<evidence type="ECO:0000255" key="2"/>
<evidence type="ECO:0000305" key="3"/>
<evidence type="ECO:0007829" key="4">
    <source>
        <dbReference type="PDB" id="1FRY"/>
    </source>
</evidence>
<feature type="signal peptide" evidence="2">
    <location>
        <begin position="1"/>
        <end position="29"/>
    </location>
</feature>
<feature type="propeptide" id="PRO_0000004758" evidence="1">
    <location>
        <begin position="30"/>
        <end position="131"/>
    </location>
</feature>
<feature type="peptide" id="PRO_0000004759" description="Cathelin-related peptide SC5">
    <location>
        <begin position="132"/>
        <end position="160"/>
    </location>
</feature>
<feature type="disulfide bond" evidence="1">
    <location>
        <begin position="86"/>
        <end position="97"/>
    </location>
</feature>
<feature type="disulfide bond" evidence="1">
    <location>
        <begin position="108"/>
        <end position="125"/>
    </location>
</feature>
<feature type="strand" evidence="4">
    <location>
        <begin position="135"/>
        <end position="138"/>
    </location>
</feature>
<feature type="strand" evidence="4">
    <location>
        <begin position="141"/>
        <end position="144"/>
    </location>
</feature>
<feature type="turn" evidence="4">
    <location>
        <begin position="145"/>
        <end position="148"/>
    </location>
</feature>
<feature type="strand" evidence="4">
    <location>
        <begin position="149"/>
        <end position="151"/>
    </location>
</feature>
<feature type="strand" evidence="4">
    <location>
        <begin position="153"/>
        <end position="158"/>
    </location>
</feature>
<reference key="1">
    <citation type="journal article" date="1995" name="FEBS Lett.">
        <title>Molecular analysis of the sheep cathelin family reveals a novel antimicrobial peptide.</title>
        <authorList>
            <person name="Mahoney M.M."/>
            <person name="Lee A.Y."/>
            <person name="Brezinski-Caliguri D.J."/>
            <person name="Huttner K.M."/>
        </authorList>
    </citation>
    <scope>NUCLEOTIDE SEQUENCE [MRNA]</scope>
    <source>
        <tissue>Bone marrow</tissue>
    </source>
</reference>
<reference key="2">
    <citation type="journal article" date="1998" name="Gene">
        <title>Localization and genomic organization of sheep antimicrobial peptides genes.</title>
        <authorList>
            <person name="Huttner K.M."/>
            <person name="Lambeth M.R."/>
            <person name="Burkin H.R."/>
            <person name="Broad T.E."/>
        </authorList>
    </citation>
    <scope>NUCLEOTIDE SEQUENCE [GENOMIC DNA]</scope>
    <source>
        <tissue>Liver</tissue>
    </source>
</reference>
<reference key="3">
    <citation type="journal article" date="2002" name="Eur. J. Biochem.">
        <title>SMAP-29 has two LPS-binding sites and a central hinge.</title>
        <authorList>
            <person name="Tack B.F."/>
            <person name="Sawai M.V."/>
            <person name="Kearney W.R."/>
            <person name="Robertson A.D."/>
            <person name="Sherman M.A."/>
            <person name="Wang W."/>
            <person name="Hong T."/>
            <person name="Boo L.M."/>
            <person name="Wu H."/>
            <person name="Waring A.J."/>
            <person name="Lehrer R.I."/>
        </authorList>
    </citation>
    <scope>STRUCTURE BY NMR OF 132-160</scope>
</reference>
<dbReference type="EMBL" id="X92757">
    <property type="protein sequence ID" value="CAA63412.1"/>
    <property type="molecule type" value="mRNA"/>
</dbReference>
<dbReference type="EMBL" id="U60600">
    <property type="protein sequence ID" value="AAB49715.1"/>
    <property type="molecule type" value="Genomic_DNA"/>
</dbReference>
<dbReference type="PIR" id="S68411">
    <property type="entry name" value="S68411"/>
</dbReference>
<dbReference type="PIR" id="S68412">
    <property type="entry name" value="S68412"/>
</dbReference>
<dbReference type="PDB" id="1FRY">
    <property type="method" value="NMR"/>
    <property type="chains" value="A=132-160"/>
</dbReference>
<dbReference type="PDB" id="5Z26">
    <property type="method" value="NMR"/>
    <property type="chains" value="A=132-149"/>
</dbReference>
<dbReference type="PDBsum" id="1FRY"/>
<dbReference type="PDBsum" id="5Z26"/>
<dbReference type="BMRB" id="P49928"/>
<dbReference type="SMR" id="P49928"/>
<dbReference type="EvolutionaryTrace" id="P49928"/>
<dbReference type="Proteomes" id="UP000002356">
    <property type="component" value="Unplaced"/>
</dbReference>
<dbReference type="GO" id="GO:0005615">
    <property type="term" value="C:extracellular space"/>
    <property type="evidence" value="ECO:0007669"/>
    <property type="project" value="TreeGrafter"/>
</dbReference>
<dbReference type="GO" id="GO:0001530">
    <property type="term" value="F:lipopolysaccharide binding"/>
    <property type="evidence" value="ECO:0007669"/>
    <property type="project" value="TreeGrafter"/>
</dbReference>
<dbReference type="GO" id="GO:0140367">
    <property type="term" value="P:antibacterial innate immune response"/>
    <property type="evidence" value="ECO:0000315"/>
    <property type="project" value="GO_Central"/>
</dbReference>
<dbReference type="GO" id="GO:0061844">
    <property type="term" value="P:antimicrobial humoral immune response mediated by antimicrobial peptide"/>
    <property type="evidence" value="ECO:0007669"/>
    <property type="project" value="TreeGrafter"/>
</dbReference>
<dbReference type="GO" id="GO:0050829">
    <property type="term" value="P:defense response to Gram-negative bacterium"/>
    <property type="evidence" value="ECO:0007669"/>
    <property type="project" value="TreeGrafter"/>
</dbReference>
<dbReference type="GO" id="GO:0050830">
    <property type="term" value="P:defense response to Gram-positive bacterium"/>
    <property type="evidence" value="ECO:0007669"/>
    <property type="project" value="TreeGrafter"/>
</dbReference>
<dbReference type="FunFam" id="3.10.450.10:FF:000003">
    <property type="entry name" value="Cathelicidin antimicrobial peptide"/>
    <property type="match status" value="1"/>
</dbReference>
<dbReference type="Gene3D" id="3.10.450.10">
    <property type="match status" value="1"/>
</dbReference>
<dbReference type="InterPro" id="IPR001894">
    <property type="entry name" value="Cathelicidin-like"/>
</dbReference>
<dbReference type="InterPro" id="IPR018216">
    <property type="entry name" value="Cathelicidin_CS"/>
</dbReference>
<dbReference type="InterPro" id="IPR046350">
    <property type="entry name" value="Cystatin_sf"/>
</dbReference>
<dbReference type="PANTHER" id="PTHR10206">
    <property type="entry name" value="CATHELICIDIN"/>
    <property type="match status" value="1"/>
</dbReference>
<dbReference type="PANTHER" id="PTHR10206:SF2">
    <property type="entry name" value="CATHELICIDIN ANTIMICROBIAL PEPTIDE"/>
    <property type="match status" value="1"/>
</dbReference>
<dbReference type="Pfam" id="PF00666">
    <property type="entry name" value="Cathelicidins"/>
    <property type="match status" value="1"/>
</dbReference>
<dbReference type="SUPFAM" id="SSF54403">
    <property type="entry name" value="Cystatin/monellin"/>
    <property type="match status" value="1"/>
</dbReference>
<dbReference type="PROSITE" id="PS00946">
    <property type="entry name" value="CATHELICIDINS_1"/>
    <property type="match status" value="1"/>
</dbReference>
<dbReference type="PROSITE" id="PS00947">
    <property type="entry name" value="CATHELICIDINS_2"/>
    <property type="match status" value="1"/>
</dbReference>
<name>SC51_SHEEP</name>
<proteinExistence type="evidence at protein level"/>
<keyword id="KW-0002">3D-structure</keyword>
<keyword id="KW-0044">Antibiotic</keyword>
<keyword id="KW-0929">Antimicrobial</keyword>
<keyword id="KW-1015">Disulfide bond</keyword>
<keyword id="KW-1185">Reference proteome</keyword>
<keyword id="KW-0964">Secreted</keyword>
<keyword id="KW-0732">Signal</keyword>